<comment type="function">
    <text evidence="1">Catalyzes the hydrolysis of N-formyl-L-kynurenine to L-kynurenine, the second step in the kynurenine pathway of tryptophan degradation.</text>
</comment>
<comment type="catalytic activity">
    <reaction evidence="1">
        <text>N-formyl-L-kynurenine + H2O = L-kynurenine + formate + H(+)</text>
        <dbReference type="Rhea" id="RHEA:13009"/>
        <dbReference type="ChEBI" id="CHEBI:15377"/>
        <dbReference type="ChEBI" id="CHEBI:15378"/>
        <dbReference type="ChEBI" id="CHEBI:15740"/>
        <dbReference type="ChEBI" id="CHEBI:57959"/>
        <dbReference type="ChEBI" id="CHEBI:58629"/>
        <dbReference type="EC" id="3.5.1.9"/>
    </reaction>
</comment>
<comment type="cofactor">
    <cofactor evidence="1">
        <name>Zn(2+)</name>
        <dbReference type="ChEBI" id="CHEBI:29105"/>
    </cofactor>
    <text evidence="1">Binds 2 zinc ions per subunit.</text>
</comment>
<comment type="pathway">
    <text evidence="1">Amino-acid degradation; L-tryptophan degradation via kynurenine pathway; L-kynurenine from L-tryptophan: step 2/2.</text>
</comment>
<comment type="subunit">
    <text evidence="1">Homodimer.</text>
</comment>
<comment type="similarity">
    <text evidence="1">Belongs to the Cyclase 1 superfamily. KynB family.</text>
</comment>
<reference key="1">
    <citation type="submission" date="2006-05" db="EMBL/GenBank/DDBJ databases">
        <title>Complete sequence of chromosome 1 of Burkholderia cenocepacia AU 1054.</title>
        <authorList>
            <consortium name="US DOE Joint Genome Institute"/>
            <person name="Copeland A."/>
            <person name="Lucas S."/>
            <person name="Lapidus A."/>
            <person name="Barry K."/>
            <person name="Detter J.C."/>
            <person name="Glavina del Rio T."/>
            <person name="Hammon N."/>
            <person name="Israni S."/>
            <person name="Dalin E."/>
            <person name="Tice H."/>
            <person name="Pitluck S."/>
            <person name="Chain P."/>
            <person name="Malfatti S."/>
            <person name="Shin M."/>
            <person name="Vergez L."/>
            <person name="Schmutz J."/>
            <person name="Larimer F."/>
            <person name="Land M."/>
            <person name="Hauser L."/>
            <person name="Kyrpides N."/>
            <person name="Lykidis A."/>
            <person name="LiPuma J.J."/>
            <person name="Konstantinidis K."/>
            <person name="Tiedje J.M."/>
            <person name="Richardson P."/>
        </authorList>
    </citation>
    <scope>NUCLEOTIDE SEQUENCE [LARGE SCALE GENOMIC DNA]</scope>
    <source>
        <strain>AU 1054</strain>
    </source>
</reference>
<organism>
    <name type="scientific">Burkholderia orbicola (strain AU 1054)</name>
    <dbReference type="NCBI Taxonomy" id="331271"/>
    <lineage>
        <taxon>Bacteria</taxon>
        <taxon>Pseudomonadati</taxon>
        <taxon>Pseudomonadota</taxon>
        <taxon>Betaproteobacteria</taxon>
        <taxon>Burkholderiales</taxon>
        <taxon>Burkholderiaceae</taxon>
        <taxon>Burkholderia</taxon>
        <taxon>Burkholderia cepacia complex</taxon>
        <taxon>Burkholderia orbicola</taxon>
    </lineage>
</organism>
<sequence length="213" mass="22677">MDTLWDISPPVSPATPVWPGDTPVAVERVWRMEAGSPVNVARLTLSPHTGAHCDAPLHYDADGAPIGAVPLDTYLGPCRVIHCIGASPVVRPADVEAALDGVPPRVLLRTYARAAVEQWDSNFCAVAPDTVDLLAAHGVKLIGIDTPSLDPQESKTMDAHHRVRAHRMAILEGIVLDDVPPGDYELIALPLKFATLDASPVRAVLRALPAHAS</sequence>
<proteinExistence type="inferred from homology"/>
<name>KYNB_BURO1</name>
<accession>Q1BU36</accession>
<dbReference type="EC" id="3.5.1.9" evidence="1"/>
<dbReference type="EMBL" id="CP000378">
    <property type="protein sequence ID" value="ABF76869.1"/>
    <property type="molecule type" value="Genomic_DNA"/>
</dbReference>
<dbReference type="SMR" id="Q1BU36"/>
<dbReference type="HOGENOM" id="CLU_030671_3_1_4"/>
<dbReference type="UniPathway" id="UPA00333">
    <property type="reaction ID" value="UER00454"/>
</dbReference>
<dbReference type="GO" id="GO:0004061">
    <property type="term" value="F:arylformamidase activity"/>
    <property type="evidence" value="ECO:0000250"/>
    <property type="project" value="UniProtKB"/>
</dbReference>
<dbReference type="GO" id="GO:0004328">
    <property type="term" value="F:formamidase activity"/>
    <property type="evidence" value="ECO:0007669"/>
    <property type="project" value="InterPro"/>
</dbReference>
<dbReference type="GO" id="GO:0008270">
    <property type="term" value="F:zinc ion binding"/>
    <property type="evidence" value="ECO:0007669"/>
    <property type="project" value="UniProtKB-UniRule"/>
</dbReference>
<dbReference type="GO" id="GO:0043420">
    <property type="term" value="P:anthranilate metabolic process"/>
    <property type="evidence" value="ECO:0000250"/>
    <property type="project" value="UniProtKB"/>
</dbReference>
<dbReference type="GO" id="GO:0019441">
    <property type="term" value="P:L-tryptophan catabolic process to kynurenine"/>
    <property type="evidence" value="ECO:0000250"/>
    <property type="project" value="UniProtKB"/>
</dbReference>
<dbReference type="FunFam" id="3.50.30.50:FF:000001">
    <property type="entry name" value="Kynurenine formamidase"/>
    <property type="match status" value="1"/>
</dbReference>
<dbReference type="Gene3D" id="3.50.30.50">
    <property type="entry name" value="Putative cyclase"/>
    <property type="match status" value="1"/>
</dbReference>
<dbReference type="HAMAP" id="MF_01969">
    <property type="entry name" value="KynB"/>
    <property type="match status" value="1"/>
</dbReference>
<dbReference type="InterPro" id="IPR007325">
    <property type="entry name" value="KFase/CYL"/>
</dbReference>
<dbReference type="InterPro" id="IPR037175">
    <property type="entry name" value="KFase_sf"/>
</dbReference>
<dbReference type="InterPro" id="IPR017484">
    <property type="entry name" value="Kynurenine_formamidase_bac"/>
</dbReference>
<dbReference type="NCBIfam" id="TIGR03035">
    <property type="entry name" value="trp_arylform"/>
    <property type="match status" value="1"/>
</dbReference>
<dbReference type="PANTHER" id="PTHR31118">
    <property type="entry name" value="CYCLASE-LIKE PROTEIN 2"/>
    <property type="match status" value="1"/>
</dbReference>
<dbReference type="PANTHER" id="PTHR31118:SF32">
    <property type="entry name" value="KYNURENINE FORMAMIDASE"/>
    <property type="match status" value="1"/>
</dbReference>
<dbReference type="Pfam" id="PF04199">
    <property type="entry name" value="Cyclase"/>
    <property type="match status" value="1"/>
</dbReference>
<dbReference type="SUPFAM" id="SSF102198">
    <property type="entry name" value="Putative cyclase"/>
    <property type="match status" value="1"/>
</dbReference>
<gene>
    <name evidence="1" type="primary">kynB</name>
    <name type="ordered locus">Bcen_1966</name>
</gene>
<protein>
    <recommendedName>
        <fullName evidence="1">Kynurenine formamidase</fullName>
        <shortName evidence="1">KFA</shortName>
        <shortName evidence="1">KFase</shortName>
        <ecNumber evidence="1">3.5.1.9</ecNumber>
    </recommendedName>
    <alternativeName>
        <fullName evidence="1">Arylformamidase</fullName>
    </alternativeName>
    <alternativeName>
        <fullName evidence="1">N-formylkynurenine formamidase</fullName>
        <shortName evidence="1">FKF</shortName>
    </alternativeName>
</protein>
<keyword id="KW-0378">Hydrolase</keyword>
<keyword id="KW-0479">Metal-binding</keyword>
<keyword id="KW-0823">Tryptophan catabolism</keyword>
<keyword id="KW-0862">Zinc</keyword>
<feature type="chain" id="PRO_0000362100" description="Kynurenine formamidase">
    <location>
        <begin position="1"/>
        <end position="213"/>
    </location>
</feature>
<feature type="active site" description="Proton donor/acceptor" evidence="1">
    <location>
        <position position="58"/>
    </location>
</feature>
<feature type="binding site" evidence="1">
    <location>
        <position position="18"/>
    </location>
    <ligand>
        <name>substrate</name>
    </ligand>
</feature>
<feature type="binding site" evidence="1">
    <location>
        <position position="48"/>
    </location>
    <ligand>
        <name>Zn(2+)</name>
        <dbReference type="ChEBI" id="CHEBI:29105"/>
        <label>1</label>
    </ligand>
</feature>
<feature type="binding site" evidence="1">
    <location>
        <position position="52"/>
    </location>
    <ligand>
        <name>Zn(2+)</name>
        <dbReference type="ChEBI" id="CHEBI:29105"/>
        <label>1</label>
    </ligand>
</feature>
<feature type="binding site" evidence="1">
    <location>
        <position position="54"/>
    </location>
    <ligand>
        <name>Zn(2+)</name>
        <dbReference type="ChEBI" id="CHEBI:29105"/>
        <label>1</label>
    </ligand>
</feature>
<feature type="binding site" evidence="1">
    <location>
        <position position="54"/>
    </location>
    <ligand>
        <name>Zn(2+)</name>
        <dbReference type="ChEBI" id="CHEBI:29105"/>
        <label>2</label>
    </ligand>
</feature>
<feature type="binding site" evidence="1">
    <location>
        <position position="160"/>
    </location>
    <ligand>
        <name>Zn(2+)</name>
        <dbReference type="ChEBI" id="CHEBI:29105"/>
        <label>2</label>
    </ligand>
</feature>
<feature type="binding site" evidence="1">
    <location>
        <position position="172"/>
    </location>
    <ligand>
        <name>Zn(2+)</name>
        <dbReference type="ChEBI" id="CHEBI:29105"/>
        <label>1</label>
    </ligand>
</feature>
<feature type="binding site" evidence="1">
    <location>
        <position position="172"/>
    </location>
    <ligand>
        <name>Zn(2+)</name>
        <dbReference type="ChEBI" id="CHEBI:29105"/>
        <label>2</label>
    </ligand>
</feature>
<evidence type="ECO:0000255" key="1">
    <source>
        <dbReference type="HAMAP-Rule" id="MF_01969"/>
    </source>
</evidence>